<dbReference type="EMBL" id="AE000520">
    <property type="protein sequence ID" value="AAC65655.1"/>
    <property type="molecule type" value="Genomic_DNA"/>
</dbReference>
<dbReference type="PIR" id="G71294">
    <property type="entry name" value="G71294"/>
</dbReference>
<dbReference type="RefSeq" id="WP_010882124.1">
    <property type="nucleotide sequence ID" value="NC_021490.2"/>
</dbReference>
<dbReference type="IntAct" id="O83685">
    <property type="interactions" value="10"/>
</dbReference>
<dbReference type="STRING" id="243276.TP_0679"/>
<dbReference type="EnsemblBacteria" id="AAC65655">
    <property type="protein sequence ID" value="AAC65655"/>
    <property type="gene ID" value="TP_0679"/>
</dbReference>
<dbReference type="KEGG" id="tpa:TP_0679"/>
<dbReference type="KEGG" id="tpw:TPANIC_0679"/>
<dbReference type="HOGENOM" id="CLU_2235393_0_0_12"/>
<dbReference type="Proteomes" id="UP000000811">
    <property type="component" value="Chromosome"/>
</dbReference>
<dbReference type="GO" id="GO:0005886">
    <property type="term" value="C:plasma membrane"/>
    <property type="evidence" value="ECO:0007669"/>
    <property type="project" value="UniProtKB-SubCell"/>
</dbReference>
<organism>
    <name type="scientific">Treponema pallidum (strain Nichols)</name>
    <dbReference type="NCBI Taxonomy" id="243276"/>
    <lineage>
        <taxon>Bacteria</taxon>
        <taxon>Pseudomonadati</taxon>
        <taxon>Spirochaetota</taxon>
        <taxon>Spirochaetia</taxon>
        <taxon>Spirochaetales</taxon>
        <taxon>Treponemataceae</taxon>
        <taxon>Treponema</taxon>
    </lineage>
</organism>
<reference key="1">
    <citation type="journal article" date="1998" name="Science">
        <title>Complete genome sequence of Treponema pallidum, the syphilis spirochete.</title>
        <authorList>
            <person name="Fraser C.M."/>
            <person name="Norris S.J."/>
            <person name="Weinstock G.M."/>
            <person name="White O."/>
            <person name="Sutton G.G."/>
            <person name="Dodson R.J."/>
            <person name="Gwinn M.L."/>
            <person name="Hickey E.K."/>
            <person name="Clayton R.A."/>
            <person name="Ketchum K.A."/>
            <person name="Sodergren E."/>
            <person name="Hardham J.M."/>
            <person name="McLeod M.P."/>
            <person name="Salzberg S.L."/>
            <person name="Peterson J.D."/>
            <person name="Khalak H.G."/>
            <person name="Richardson D.L."/>
            <person name="Howell J.K."/>
            <person name="Chidambaram M."/>
            <person name="Utterback T.R."/>
            <person name="McDonald L.A."/>
            <person name="Artiach P."/>
            <person name="Bowman C."/>
            <person name="Cotton M.D."/>
            <person name="Fujii C."/>
            <person name="Garland S.A."/>
            <person name="Hatch B."/>
            <person name="Horst K."/>
            <person name="Roberts K.M."/>
            <person name="Sandusky M."/>
            <person name="Weidman J.F."/>
            <person name="Smith H.O."/>
            <person name="Venter J.C."/>
        </authorList>
    </citation>
    <scope>NUCLEOTIDE SEQUENCE [LARGE SCALE GENOMIC DNA]</scope>
    <source>
        <strain>Nichols</strain>
    </source>
</reference>
<feature type="chain" id="PRO_0000202304" description="Uncharacterized protein TP_0679">
    <location>
        <begin position="1"/>
        <end position="105"/>
    </location>
</feature>
<feature type="transmembrane region" description="Helical" evidence="1">
    <location>
        <begin position="14"/>
        <end position="34"/>
    </location>
</feature>
<feature type="transmembrane region" description="Helical" evidence="1">
    <location>
        <begin position="41"/>
        <end position="61"/>
    </location>
</feature>
<feature type="transmembrane region" description="Helical" evidence="1">
    <location>
        <begin position="80"/>
        <end position="100"/>
    </location>
</feature>
<protein>
    <recommendedName>
        <fullName>Uncharacterized protein TP_0679</fullName>
    </recommendedName>
</protein>
<sequence length="105" mass="11586">MNEFLSLLSRAQTILLMLRLAVTAVAVFLAIVAWTKTRTQETVCFIAGVLCMYLAQLFAFLRAAGFSITRYTPVPGVSLVGFTLELLPLACFIASLIFTIKRHSI</sequence>
<gene>
    <name type="ordered locus">TP_0679</name>
</gene>
<name>Y679_TREPA</name>
<keyword id="KW-1003">Cell membrane</keyword>
<keyword id="KW-0472">Membrane</keyword>
<keyword id="KW-1185">Reference proteome</keyword>
<keyword id="KW-0812">Transmembrane</keyword>
<keyword id="KW-1133">Transmembrane helix</keyword>
<proteinExistence type="predicted"/>
<evidence type="ECO:0000255" key="1"/>
<evidence type="ECO:0000305" key="2"/>
<comment type="subcellular location">
    <subcellularLocation>
        <location evidence="2">Cell membrane</location>
        <topology evidence="2">Multi-pass membrane protein</topology>
    </subcellularLocation>
</comment>
<accession>O83685</accession>